<keyword id="KW-0002">3D-structure</keyword>
<keyword id="KW-1003">Cell membrane</keyword>
<keyword id="KW-0378">Hydrolase</keyword>
<keyword id="KW-0472">Membrane</keyword>
<keyword id="KW-1185">Reference proteome</keyword>
<keyword id="KW-0812">Transmembrane</keyword>
<keyword id="KW-1133">Transmembrane helix</keyword>
<name>SRTB_LISMO</name>
<dbReference type="EC" id="3.4.22.-" evidence="13"/>
<dbReference type="EMBL" id="AL591982">
    <property type="protein sequence ID" value="CAD00259.1"/>
    <property type="molecule type" value="Genomic_DNA"/>
</dbReference>
<dbReference type="PIR" id="AE1347">
    <property type="entry name" value="AE1347"/>
</dbReference>
<dbReference type="RefSeq" id="NP_465705.1">
    <property type="nucleotide sequence ID" value="NC_003210.1"/>
</dbReference>
<dbReference type="RefSeq" id="WP_010989918.1">
    <property type="nucleotide sequence ID" value="NZ_CP149495.1"/>
</dbReference>
<dbReference type="PDB" id="5JCV">
    <property type="method" value="X-ray"/>
    <property type="resolution" value="2.23 A"/>
    <property type="chains" value="A=64-243"/>
</dbReference>
<dbReference type="PDBsum" id="5JCV"/>
<dbReference type="SMR" id="Q8Y588"/>
<dbReference type="STRING" id="169963.gene:17594872"/>
<dbReference type="MEROPS" id="C60.002"/>
<dbReference type="PaxDb" id="169963-lmo2181"/>
<dbReference type="EnsemblBacteria" id="CAD00259">
    <property type="protein sequence ID" value="CAD00259"/>
    <property type="gene ID" value="CAD00259"/>
</dbReference>
<dbReference type="GeneID" id="984655"/>
<dbReference type="KEGG" id="lmo:lmo2181"/>
<dbReference type="PATRIC" id="fig|169963.11.peg.2233"/>
<dbReference type="eggNOG" id="COG4509">
    <property type="taxonomic scope" value="Bacteria"/>
</dbReference>
<dbReference type="HOGENOM" id="CLU_034078_3_0_9"/>
<dbReference type="OrthoDB" id="9806013at2"/>
<dbReference type="PhylomeDB" id="Q8Y588"/>
<dbReference type="BioCyc" id="LMON169963:LMO2181-MONOMER"/>
<dbReference type="Proteomes" id="UP000000817">
    <property type="component" value="Chromosome"/>
</dbReference>
<dbReference type="GO" id="GO:0005886">
    <property type="term" value="C:plasma membrane"/>
    <property type="evidence" value="ECO:0007669"/>
    <property type="project" value="UniProtKB-SubCell"/>
</dbReference>
<dbReference type="GO" id="GO:0016787">
    <property type="term" value="F:hydrolase activity"/>
    <property type="evidence" value="ECO:0007669"/>
    <property type="project" value="UniProtKB-KW"/>
</dbReference>
<dbReference type="GO" id="GO:0071281">
    <property type="term" value="P:cellular response to iron ion"/>
    <property type="evidence" value="ECO:0000270"/>
    <property type="project" value="CollecTF"/>
</dbReference>
<dbReference type="CDD" id="cd05826">
    <property type="entry name" value="Sortase_B"/>
    <property type="match status" value="1"/>
</dbReference>
<dbReference type="Gene3D" id="2.40.260.10">
    <property type="entry name" value="Sortase"/>
    <property type="match status" value="1"/>
</dbReference>
<dbReference type="InterPro" id="IPR005754">
    <property type="entry name" value="Sortase"/>
</dbReference>
<dbReference type="InterPro" id="IPR023365">
    <property type="entry name" value="Sortase_dom-sf"/>
</dbReference>
<dbReference type="InterPro" id="IPR009835">
    <property type="entry name" value="SrtB"/>
</dbReference>
<dbReference type="InterPro" id="IPR015986">
    <property type="entry name" value="SrtB_Firmicute"/>
</dbReference>
<dbReference type="NCBIfam" id="TIGR03064">
    <property type="entry name" value="sortase_srtB"/>
    <property type="match status" value="1"/>
</dbReference>
<dbReference type="Pfam" id="PF04203">
    <property type="entry name" value="Sortase"/>
    <property type="match status" value="1"/>
</dbReference>
<dbReference type="PIRSF" id="PIRSF030150">
    <property type="entry name" value="UCP030150"/>
    <property type="match status" value="1"/>
</dbReference>
<dbReference type="SUPFAM" id="SSF63817">
    <property type="entry name" value="Sortase"/>
    <property type="match status" value="1"/>
</dbReference>
<feature type="chain" id="PRO_0000445907" description="Sortase B">
    <location>
        <begin position="1"/>
        <end position="246"/>
    </location>
</feature>
<feature type="transmembrane region" description="Helical" evidence="1">
    <location>
        <begin position="5"/>
        <end position="24"/>
    </location>
</feature>
<feature type="helix" evidence="15">
    <location>
        <begin position="64"/>
        <end position="73"/>
    </location>
</feature>
<feature type="strand" evidence="15">
    <location>
        <begin position="74"/>
        <end position="79"/>
    </location>
</feature>
<feature type="strand" evidence="15">
    <location>
        <begin position="86"/>
        <end position="90"/>
    </location>
</feature>
<feature type="strand" evidence="15">
    <location>
        <begin position="93"/>
        <end position="96"/>
    </location>
</feature>
<feature type="helix" evidence="15">
    <location>
        <begin position="97"/>
        <end position="100"/>
    </location>
</feature>
<feature type="strand" evidence="15">
    <location>
        <begin position="113"/>
        <end position="115"/>
    </location>
</feature>
<feature type="turn" evidence="15">
    <location>
        <begin position="122"/>
        <end position="124"/>
    </location>
</feature>
<feature type="strand" evidence="15">
    <location>
        <begin position="126"/>
        <end position="132"/>
    </location>
</feature>
<feature type="helix" evidence="15">
    <location>
        <begin position="142"/>
        <end position="148"/>
    </location>
</feature>
<feature type="helix" evidence="15">
    <location>
        <begin position="150"/>
        <end position="155"/>
    </location>
</feature>
<feature type="strand" evidence="15">
    <location>
        <begin position="158"/>
        <end position="162"/>
    </location>
</feature>
<feature type="strand" evidence="15">
    <location>
        <begin position="167"/>
        <end position="180"/>
    </location>
</feature>
<feature type="helix" evidence="15">
    <location>
        <begin position="183"/>
        <end position="185"/>
    </location>
</feature>
<feature type="helix" evidence="15">
    <location>
        <begin position="192"/>
        <end position="205"/>
    </location>
</feature>
<feature type="strand" evidence="15">
    <location>
        <begin position="206"/>
        <end position="208"/>
    </location>
</feature>
<feature type="strand" evidence="15">
    <location>
        <begin position="220"/>
        <end position="225"/>
    </location>
</feature>
<feature type="strand" evidence="15">
    <location>
        <begin position="236"/>
        <end position="242"/>
    </location>
</feature>
<gene>
    <name evidence="8" type="primary">srtB</name>
    <name type="ordered locus">lmo2181</name>
</gene>
<protein>
    <recommendedName>
        <fullName evidence="8">Sortase B</fullName>
        <ecNumber evidence="13">3.4.22.-</ecNumber>
    </recommendedName>
</protein>
<evidence type="ECO:0000255" key="1"/>
<evidence type="ECO:0000269" key="2">
    <source>
    </source>
</evidence>
<evidence type="ECO:0000269" key="3">
    <source>
    </source>
</evidence>
<evidence type="ECO:0000269" key="4">
    <source>
    </source>
</evidence>
<evidence type="ECO:0000269" key="5">
    <source>
    </source>
</evidence>
<evidence type="ECO:0000269" key="6">
    <source>
    </source>
</evidence>
<evidence type="ECO:0000269" key="7">
    <source>
    </source>
</evidence>
<evidence type="ECO:0000303" key="8">
    <source>
    </source>
</evidence>
<evidence type="ECO:0000305" key="9"/>
<evidence type="ECO:0000305" key="10">
    <source>
    </source>
</evidence>
<evidence type="ECO:0000305" key="11">
    <source>
    </source>
</evidence>
<evidence type="ECO:0000305" key="12">
    <source>
    </source>
</evidence>
<evidence type="ECO:0000305" key="13">
    <source>
    </source>
</evidence>
<evidence type="ECO:0007744" key="14">
    <source>
        <dbReference type="PDB" id="5JCV"/>
    </source>
</evidence>
<evidence type="ECO:0007829" key="15">
    <source>
        <dbReference type="PDB" id="5JCV"/>
    </source>
</evidence>
<comment type="function">
    <text evidence="2 4 6 10 12">Transpeptidase that anchors surface proteins to the cell wall (Probable) (PubMed:16247833, PubMed:19129190). Recognizes and modifies its substrate by proteolytic cleavage of a C-terminal sorting signal. Following cleavage, a covalent intermediate is formed via a thioester bond between the sortase and its substrate, which is then transferred and covalently attached to the cell wall (Probable). Catalyzes a cell wall sorting reaction in which a surface protein with the consensus sorting signal NP(Q/K)(T/S)(N/G/S)(D/A) is cleaved between the fourth and fifth residues, and the fourth position is linked to the cell wall (Probable) (PubMed:19129190). This is not the major sortase in Listeria, it seems to anchor only 2 proteins, Hbp2 (SvpA) and Hbp1 (PubMed:15028680, PubMed:16247833).</text>
</comment>
<comment type="subcellular location">
    <subcellularLocation>
        <location evidence="1">Cell membrane</location>
        <topology evidence="1">Single-pass membrane protein</topology>
    </subcellularLocation>
</comment>
<comment type="induction">
    <text evidence="2 7 11">Strongly expressed in mid-log phase, cotranscribed with lmo2182 and lmo2180, the sixth gene in a possible lmo2186-lmo2180 operon (PubMed:15028680). Induced under iron-deficient conditions and when fur (lmo1956, AC Q8Y5U9) is deleted (Probable). Induced when bacteria are grown in human cell lines (Probable). Decreased hemin-binding and hemin uptake by whole bacteria (PubMed:21545655).</text>
</comment>
<comment type="disruption phenotype">
    <text evidence="2 3 4 5 7">No visible phenotype in growth, no change in cell wall-anchoring of InlA, no effect on bacterial growth within host cells nor on virulence in a mouse infection model (PubMed:15028680). Loss of cell wall-anchoring of Hbp2 (SvpA); Hbp2 is still secreted and runs with an apparent lower molecular weight in gels (PubMed:15028680). A double srtA-srtB deletion mutant has no cell wall-anchored proteins (PubMed:15028680). No cell wall anchoring of Hbp1 or Hbp2 (SvpA) (PubMed:16247833). Does not impair iron transport (PubMed:15661014, PubMed:16430693). Decreased binding and uptake of hemin at low (0.5 uM and 5 uM) but not high hemin concentrations (at 50 uM no effect is seen) (PubMed:21545655).</text>
</comment>
<comment type="similarity">
    <text evidence="9">Belongs to the bacterial sortase family. Class B subfamily.</text>
</comment>
<proteinExistence type="evidence at protein level"/>
<sequence>MKIKSFLGKSLTLVVLGVFLFSGWKIGMELYENKHNQTILDDAKAVYTKDAATTNVNGEVRDELRDLQKLNKDMVGWLTIIDTEIDYPILQSKDNDYYLHHNYKNEKARAGSIFKDYRNTNEFLDKNTIIYGHNMKDGSMFADLRKYLDKDFLVAHPTFSYESGLTNYEVEIFAVYETTTDFYYIETEFPETTDFEDYLQKVKQQSVYTSNVKVSGKDRIITLSTCDTEKDYEKGRMVIQGKLVTK</sequence>
<accession>Q8Y588</accession>
<organism>
    <name type="scientific">Listeria monocytogenes serovar 1/2a (strain ATCC BAA-679 / EGD-e)</name>
    <dbReference type="NCBI Taxonomy" id="169963"/>
    <lineage>
        <taxon>Bacteria</taxon>
        <taxon>Bacillati</taxon>
        <taxon>Bacillota</taxon>
        <taxon>Bacilli</taxon>
        <taxon>Bacillales</taxon>
        <taxon>Listeriaceae</taxon>
        <taxon>Listeria</taxon>
    </lineage>
</organism>
<reference key="1">
    <citation type="journal article" date="2001" name="Science">
        <title>Comparative genomics of Listeria species.</title>
        <authorList>
            <person name="Glaser P."/>
            <person name="Frangeul L."/>
            <person name="Buchrieser C."/>
            <person name="Rusniok C."/>
            <person name="Amend A."/>
            <person name="Baquero F."/>
            <person name="Berche P."/>
            <person name="Bloecker H."/>
            <person name="Brandt P."/>
            <person name="Chakraborty T."/>
            <person name="Charbit A."/>
            <person name="Chetouani F."/>
            <person name="Couve E."/>
            <person name="de Daruvar A."/>
            <person name="Dehoux P."/>
            <person name="Domann E."/>
            <person name="Dominguez-Bernal G."/>
            <person name="Duchaud E."/>
            <person name="Durant L."/>
            <person name="Dussurget O."/>
            <person name="Entian K.-D."/>
            <person name="Fsihi H."/>
            <person name="Garcia-del Portillo F."/>
            <person name="Garrido P."/>
            <person name="Gautier L."/>
            <person name="Goebel W."/>
            <person name="Gomez-Lopez N."/>
            <person name="Hain T."/>
            <person name="Hauf J."/>
            <person name="Jackson D."/>
            <person name="Jones L.-M."/>
            <person name="Kaerst U."/>
            <person name="Kreft J."/>
            <person name="Kuhn M."/>
            <person name="Kunst F."/>
            <person name="Kurapkat G."/>
            <person name="Madueno E."/>
            <person name="Maitournam A."/>
            <person name="Mata Vicente J."/>
            <person name="Ng E."/>
            <person name="Nedjari H."/>
            <person name="Nordsiek G."/>
            <person name="Novella S."/>
            <person name="de Pablos B."/>
            <person name="Perez-Diaz J.-C."/>
            <person name="Purcell R."/>
            <person name="Remmel B."/>
            <person name="Rose M."/>
            <person name="Schlueter T."/>
            <person name="Simoes N."/>
            <person name="Tierrez A."/>
            <person name="Vazquez-Boland J.-A."/>
            <person name="Voss H."/>
            <person name="Wehland J."/>
            <person name="Cossart P."/>
        </authorList>
    </citation>
    <scope>NUCLEOTIDE SEQUENCE [LARGE SCALE GENOMIC DNA]</scope>
    <source>
        <strain>ATCC BAA-679 / EGD-e</strain>
    </source>
</reference>
<reference key="2">
    <citation type="journal article" date="2002" name="Mol. Microbiol.">
        <title>Inactivation of the srtA gene in Listeria monocytogenes inhibits anchoring of surface proteins and affects virulence.</title>
        <authorList>
            <person name="Bierne H."/>
            <person name="Mazmanian S.K."/>
            <person name="Trost M."/>
            <person name="Pucciarelli M.G."/>
            <person name="Liu G."/>
            <person name="Dehoux P."/>
            <person name="Jansch L."/>
            <person name="Garcia-del Portillo F."/>
            <person name="Schneewind O."/>
            <person name="Cossart P."/>
        </authorList>
    </citation>
    <scope>IDENTIFICATION</scope>
    <source>
        <strain>ATCC BAA-679 / EGD-e</strain>
    </source>
</reference>
<reference key="3">
    <citation type="journal article" date="2004" name="J. Bacteriol.">
        <title>Sortase B, a new class of sortase in Listeria monocytogenes.</title>
        <authorList>
            <person name="Bierne H."/>
            <person name="Garandeau C."/>
            <person name="Pucciarelli M.G."/>
            <person name="Sabet C."/>
            <person name="Newton S."/>
            <person name="Garcia-del Portillo F."/>
            <person name="Cossart P."/>
            <person name="Charbit A."/>
        </authorList>
    </citation>
    <scope>FUNCTION</scope>
    <scope>INDUCTION</scope>
    <scope>OPERON</scope>
    <scope>DISRUPTION PHENOTYPE</scope>
    <source>
        <strain>ATCC BAA-679 / EGD-e</strain>
    </source>
</reference>
<reference key="4">
    <citation type="journal article" date="2005" name="Mol. Microbiol.">
        <title>The svpA-srtB locus of Listeria monocytogenes: fur-mediated iron regulation and effect on virulence.</title>
        <authorList>
            <person name="Newton S.M."/>
            <person name="Klebba P.E."/>
            <person name="Raynaud C."/>
            <person name="Shao Y."/>
            <person name="Jiang X."/>
            <person name="Dubail I."/>
            <person name="Archer C."/>
            <person name="Frehel C."/>
            <person name="Charbit A."/>
        </authorList>
    </citation>
    <scope>INDUCTION BY IRON-DEPLETION</scope>
    <scope>DISRUPTION PHENOTYPE</scope>
    <source>
        <strain>ATCC BAA-679 / EGD-e</strain>
    </source>
</reference>
<reference key="5">
    <citation type="journal article" date="2005" name="Proteomics">
        <title>Identification of substrates of the Listeria monocytogenes sortases A and B by a non-gel proteomic analysis.</title>
        <authorList>
            <person name="Pucciarelli M.G."/>
            <person name="Calvo E."/>
            <person name="Sabet C."/>
            <person name="Bierne H."/>
            <person name="Cossart P."/>
            <person name="Garcia-del Portillo F."/>
        </authorList>
    </citation>
    <scope>FUNCTION</scope>
    <scope>SUBSTRATE SPECIFICITY</scope>
    <scope>DISRUPTION PHENOTYPE</scope>
    <source>
        <strain>ATCC BAA-679 / EGD-e</strain>
    </source>
</reference>
<reference key="6">
    <citation type="journal article" date="2006" name="Mol. Microbiol.">
        <title>Iron acquisition systems for ferric hydroxamates, haemin and haemoglobin in Listeria monocytogenes.</title>
        <authorList>
            <person name="Jin B."/>
            <person name="Newton S.M."/>
            <person name="Shao Y."/>
            <person name="Jiang X."/>
            <person name="Charbit A."/>
            <person name="Klebba P.E."/>
        </authorList>
    </citation>
    <scope>DISRUPTION PHENOTYPE</scope>
    <source>
        <strain>ATCC BAA-679 / EGD-e</strain>
    </source>
</reference>
<reference key="7">
    <citation type="journal article" date="2009" name="J. Biol. Chem.">
        <title>The Listeria monocytogenes sortase-B recognizes varied amino acids at position 2 of the sorting motif.</title>
        <authorList>
            <person name="Mariscotti J.F."/>
            <person name="Garcia-del Portillo F."/>
            <person name="Pucciarelli M.G."/>
        </authorList>
    </citation>
    <scope>FUNCTION</scope>
    <scope>PROBABLE CATALYTIC ACTIVITY</scope>
    <scope>IDENTIFICATION OF SORTING SIGNAL</scope>
    <source>
        <strain>ATCC BAA-679 / EGD-e</strain>
    </source>
</reference>
<reference key="8">
    <citation type="journal article" date="2011" name="Mol. Microbiol.">
        <title>Sortase independent and dependent systems for acquisition of haem and haemoglobin in Listeria monocytogenes.</title>
        <authorList>
            <person name="Xiao Q."/>
            <person name="Jiang X."/>
            <person name="Moore K.J."/>
            <person name="Shao Y."/>
            <person name="Pi H."/>
            <person name="Dubail I."/>
            <person name="Charbit A."/>
            <person name="Newton S.M."/>
            <person name="Klebba P.E."/>
        </authorList>
    </citation>
    <scope>DISRUPTION PHENOTYPE</scope>
    <source>
        <strain>ATCC BAA-679 / EGD-e</strain>
    </source>
</reference>
<reference evidence="14" key="9">
    <citation type="submission" date="2016-04" db="PDB data bank">
        <title>Sortase B from Listeria monocytogenes.</title>
        <authorList>
            <consortium name="Center for Structural Genomics of Infectious Diseases (CSGID)"/>
            <person name="Osipiuk J."/>
            <person name="Zhou M."/>
            <person name="Grimshaw S."/>
            <person name="Anderson W.F."/>
            <person name="Joachimiak A."/>
        </authorList>
    </citation>
    <scope>X-RAY CRYSTALLOGRAPHY (2.23 ANGSTROMS) OF 64-243</scope>
</reference>